<gene>
    <name type="ORF">FV3-060R</name>
</gene>
<protein>
    <recommendedName>
        <fullName>Putative DNA polymerase 060R</fullName>
        <ecNumber>2.7.7.7</ecNumber>
    </recommendedName>
</protein>
<organismHost>
    <name type="scientific">Dryophytes versicolor</name>
    <name type="common">chameleon treefrog</name>
    <dbReference type="NCBI Taxonomy" id="30343"/>
</organismHost>
<organismHost>
    <name type="scientific">Lithobates pipiens</name>
    <name type="common">Northern leopard frog</name>
    <name type="synonym">Rana pipiens</name>
    <dbReference type="NCBI Taxonomy" id="8404"/>
</organismHost>
<organismHost>
    <name type="scientific">Lithobates sylvaticus</name>
    <name type="common">Wood frog</name>
    <name type="synonym">Rana sylvatica</name>
    <dbReference type="NCBI Taxonomy" id="45438"/>
</organismHost>
<organismHost>
    <name type="scientific">Notophthalmus viridescens</name>
    <name type="common">Eastern newt</name>
    <name type="synonym">Triturus viridescens</name>
    <dbReference type="NCBI Taxonomy" id="8316"/>
</organismHost>
<name>DPOL_FRG3G</name>
<reference key="1">
    <citation type="journal article" date="2004" name="Virology">
        <title>Comparative genomic analyses of frog virus 3, type species of the genus Ranavirus (family Iridoviridae).</title>
        <authorList>
            <person name="Tan W.G."/>
            <person name="Barkman T.J."/>
            <person name="Gregory Chinchar V."/>
            <person name="Essani K."/>
        </authorList>
    </citation>
    <scope>NUCLEOTIDE SEQUENCE [LARGE SCALE GENOMIC DNA]</scope>
</reference>
<proteinExistence type="inferred from homology"/>
<accession>Q6GZR5</accession>
<evidence type="ECO:0000250" key="1"/>
<evidence type="ECO:0000305" key="2"/>
<sequence>MDLFVYQWFCDGSQEIRAYAVDSDSSTVCVRVTGFRPGFYVETASCQAVTRALQDFRDVSAEKRVRDHLYATRGSSVPFVWVTFRCWFDARKASDVLVKAGFACHQCRAQPVLQLTSLRDLPTCGWIRLGKGAVQVKREKYSRCKREFIVQWEQVERGPDVPQPEVTVVALDLEVNSEVENAMPKDRPGDEVFMAGAIILRPGKKPKRVLLSLEADDYPEAEVLAERGYAVQQYPNERSLISGLCDMLSSVKPQVVTGYNVLGFDIDYLLKRCVRLGMEEELCLTGMAAERPAKERTISWSSSAFGAQKYSYLDWEGVVAVDLLPIIKRDYKFDSYRLDFVTETLLGSNKDPVTAADIFRAYATRKMDVVGEYCVKDVQLCVDLMEKLQVWVGLTEMAKVCRVNAFTLFTQGQQIRIYSQVYCHCEKNGYVVTDPADGKRVPWGQDPPVSDEPDEDYIGAHVVEPSPGIYDNVVPLDFSSLYPSIMIAKNVCYSTRVDPGTPGSETFTWEDHLNCVHDPRKVEYERLSSELWDLDSEARELRRERDAIPRKRVDDRRLVVDTLNTVLDAQRMLRTTRAALKNQLGTKTVCACRLLAFLEPATKKGVMPTILTDLLDGRKRAKKAKAEAKDSITKITMDKRQLAYKVSANSMYGAMGVKRGYLPFQDGAMTVTYFGRQCIEKAASIIGSEHGGQLVYGDTDSNYVTFADAKTPAELWDKAVAVAKAVSSVFPPPISLEFEQVIYTKFLILGKKRYIYLSCDRDGNSSGKMGFRGVLMARRDNSGLARKAYSITAQALLEDRDPWADLTPLMKDMYTKNCSLRDFVITKQVGSWCRECAFIEQGADSIVAVGDYKIRDLEKAKAETRKITGTDGGPEYMAVLYKLVMAQLPGHVQLANRMIGRGETVADGTRLEYVVLRPSYDGKKRRFRGQGLSERLETSDYYKRFAEFLELDTEHYVKTLVNPLDQLLTTAGRPEDEFKAFYGYRVNYRKVVEDIKTLRACPEMVKIVSFKKK</sequence>
<organism>
    <name type="scientific">Frog virus 3 (isolate Goorha)</name>
    <name type="common">FV-3</name>
    <dbReference type="NCBI Taxonomy" id="654924"/>
    <lineage>
        <taxon>Viruses</taxon>
        <taxon>Varidnaviria</taxon>
        <taxon>Bamfordvirae</taxon>
        <taxon>Nucleocytoviricota</taxon>
        <taxon>Megaviricetes</taxon>
        <taxon>Pimascovirales</taxon>
        <taxon>Iridoviridae</taxon>
        <taxon>Alphairidovirinae</taxon>
        <taxon>Ranavirus</taxon>
        <taxon>Frog virus 3</taxon>
    </lineage>
</organism>
<comment type="function">
    <text evidence="1">DNA-directed DNA polymerase involved in viral DNA replication.</text>
</comment>
<comment type="catalytic activity">
    <reaction>
        <text>DNA(n) + a 2'-deoxyribonucleoside 5'-triphosphate = DNA(n+1) + diphosphate</text>
        <dbReference type="Rhea" id="RHEA:22508"/>
        <dbReference type="Rhea" id="RHEA-COMP:17339"/>
        <dbReference type="Rhea" id="RHEA-COMP:17340"/>
        <dbReference type="ChEBI" id="CHEBI:33019"/>
        <dbReference type="ChEBI" id="CHEBI:61560"/>
        <dbReference type="ChEBI" id="CHEBI:173112"/>
        <dbReference type="EC" id="2.7.7.7"/>
    </reaction>
</comment>
<comment type="similarity">
    <text evidence="2">Belongs to the DNA polymerase type-B family.</text>
</comment>
<feature type="chain" id="PRO_0000410575" description="Putative DNA polymerase 060R">
    <location>
        <begin position="1"/>
        <end position="1013"/>
    </location>
</feature>
<keyword id="KW-0235">DNA replication</keyword>
<keyword id="KW-0238">DNA-binding</keyword>
<keyword id="KW-0239">DNA-directed DNA polymerase</keyword>
<keyword id="KW-0548">Nucleotidyltransferase</keyword>
<keyword id="KW-1185">Reference proteome</keyword>
<keyword id="KW-0808">Transferase</keyword>
<keyword id="KW-1194">Viral DNA replication</keyword>
<dbReference type="EC" id="2.7.7.7"/>
<dbReference type="EMBL" id="AY548484">
    <property type="protein sequence ID" value="AAT09720.1"/>
    <property type="molecule type" value="Genomic_DNA"/>
</dbReference>
<dbReference type="RefSeq" id="YP_031639.1">
    <property type="nucleotide sequence ID" value="NC_005946.1"/>
</dbReference>
<dbReference type="SMR" id="Q6GZR5"/>
<dbReference type="KEGG" id="vg:2947760"/>
<dbReference type="Proteomes" id="UP000008770">
    <property type="component" value="Segment"/>
</dbReference>
<dbReference type="GO" id="GO:0003677">
    <property type="term" value="F:DNA binding"/>
    <property type="evidence" value="ECO:0007669"/>
    <property type="project" value="UniProtKB-KW"/>
</dbReference>
<dbReference type="GO" id="GO:0003887">
    <property type="term" value="F:DNA-directed DNA polymerase activity"/>
    <property type="evidence" value="ECO:0007669"/>
    <property type="project" value="UniProtKB-KW"/>
</dbReference>
<dbReference type="GO" id="GO:0000166">
    <property type="term" value="F:nucleotide binding"/>
    <property type="evidence" value="ECO:0007669"/>
    <property type="project" value="InterPro"/>
</dbReference>
<dbReference type="GO" id="GO:0006261">
    <property type="term" value="P:DNA-templated DNA replication"/>
    <property type="evidence" value="ECO:0007669"/>
    <property type="project" value="TreeGrafter"/>
</dbReference>
<dbReference type="GO" id="GO:0039693">
    <property type="term" value="P:viral DNA genome replication"/>
    <property type="evidence" value="ECO:0007669"/>
    <property type="project" value="UniProtKB-KW"/>
</dbReference>
<dbReference type="Gene3D" id="1.10.132.60">
    <property type="entry name" value="DNA polymerase family B, C-terminal domain"/>
    <property type="match status" value="1"/>
</dbReference>
<dbReference type="Gene3D" id="1.10.287.690">
    <property type="entry name" value="Helix hairpin bin"/>
    <property type="match status" value="1"/>
</dbReference>
<dbReference type="Gene3D" id="3.90.1600.10">
    <property type="entry name" value="Palm domain of DNA polymerase"/>
    <property type="match status" value="1"/>
</dbReference>
<dbReference type="Gene3D" id="3.30.420.10">
    <property type="entry name" value="Ribonuclease H-like superfamily/Ribonuclease H"/>
    <property type="match status" value="1"/>
</dbReference>
<dbReference type="InterPro" id="IPR006172">
    <property type="entry name" value="DNA-dir_DNA_pol_B"/>
</dbReference>
<dbReference type="InterPro" id="IPR006133">
    <property type="entry name" value="DNA-dir_DNA_pol_B_exonuc"/>
</dbReference>
<dbReference type="InterPro" id="IPR006134">
    <property type="entry name" value="DNA-dir_DNA_pol_B_multi_dom"/>
</dbReference>
<dbReference type="InterPro" id="IPR043502">
    <property type="entry name" value="DNA/RNA_pol_sf"/>
</dbReference>
<dbReference type="InterPro" id="IPR042087">
    <property type="entry name" value="DNA_pol_B_thumb"/>
</dbReference>
<dbReference type="InterPro" id="IPR023211">
    <property type="entry name" value="DNA_pol_palm_dom_sf"/>
</dbReference>
<dbReference type="InterPro" id="IPR050240">
    <property type="entry name" value="DNA_pol_type-B"/>
</dbReference>
<dbReference type="InterPro" id="IPR012337">
    <property type="entry name" value="RNaseH-like_sf"/>
</dbReference>
<dbReference type="InterPro" id="IPR036397">
    <property type="entry name" value="RNaseH_sf"/>
</dbReference>
<dbReference type="PANTHER" id="PTHR10322">
    <property type="entry name" value="DNA POLYMERASE CATALYTIC SUBUNIT"/>
    <property type="match status" value="1"/>
</dbReference>
<dbReference type="PANTHER" id="PTHR10322:SF23">
    <property type="entry name" value="DNA POLYMERASE DELTA CATALYTIC SUBUNIT"/>
    <property type="match status" value="1"/>
</dbReference>
<dbReference type="Pfam" id="PF00136">
    <property type="entry name" value="DNA_pol_B"/>
    <property type="match status" value="2"/>
</dbReference>
<dbReference type="Pfam" id="PF03104">
    <property type="entry name" value="DNA_pol_B_exo1"/>
    <property type="match status" value="1"/>
</dbReference>
<dbReference type="PRINTS" id="PR00106">
    <property type="entry name" value="DNAPOLB"/>
</dbReference>
<dbReference type="SMART" id="SM00486">
    <property type="entry name" value="POLBc"/>
    <property type="match status" value="1"/>
</dbReference>
<dbReference type="SUPFAM" id="SSF56672">
    <property type="entry name" value="DNA/RNA polymerases"/>
    <property type="match status" value="1"/>
</dbReference>
<dbReference type="SUPFAM" id="SSF53098">
    <property type="entry name" value="Ribonuclease H-like"/>
    <property type="match status" value="1"/>
</dbReference>